<reference key="1">
    <citation type="journal article" date="2006" name="Proc. Natl. Acad. Sci. U.S.A.">
        <title>Identification of genes subject to positive selection in uropathogenic strains of Escherichia coli: a comparative genomics approach.</title>
        <authorList>
            <person name="Chen S.L."/>
            <person name="Hung C.-S."/>
            <person name="Xu J."/>
            <person name="Reigstad C.S."/>
            <person name="Magrini V."/>
            <person name="Sabo A."/>
            <person name="Blasiar D."/>
            <person name="Bieri T."/>
            <person name="Meyer R.R."/>
            <person name="Ozersky P."/>
            <person name="Armstrong J.R."/>
            <person name="Fulton R.S."/>
            <person name="Latreille J.P."/>
            <person name="Spieth J."/>
            <person name="Hooton T.M."/>
            <person name="Mardis E.R."/>
            <person name="Hultgren S.J."/>
            <person name="Gordon J.I."/>
        </authorList>
    </citation>
    <scope>NUCLEOTIDE SEQUENCE [LARGE SCALE GENOMIC DNA]</scope>
    <source>
        <strain>UTI89 / UPEC</strain>
    </source>
</reference>
<proteinExistence type="inferred from homology"/>
<gene>
    <name evidence="1" type="primary">cbpM</name>
    <name type="ordered locus">UTI89_C1063</name>
</gene>
<organism>
    <name type="scientific">Escherichia coli (strain UTI89 / UPEC)</name>
    <dbReference type="NCBI Taxonomy" id="364106"/>
    <lineage>
        <taxon>Bacteria</taxon>
        <taxon>Pseudomonadati</taxon>
        <taxon>Pseudomonadota</taxon>
        <taxon>Gammaproteobacteria</taxon>
        <taxon>Enterobacterales</taxon>
        <taxon>Enterobacteriaceae</taxon>
        <taxon>Escherichia</taxon>
    </lineage>
</organism>
<dbReference type="EMBL" id="CP000243">
    <property type="protein sequence ID" value="ABE06547.1"/>
    <property type="molecule type" value="Genomic_DNA"/>
</dbReference>
<dbReference type="RefSeq" id="WP_000024569.1">
    <property type="nucleotide sequence ID" value="NZ_CP064825.1"/>
</dbReference>
<dbReference type="SMR" id="Q1RDL7"/>
<dbReference type="KEGG" id="eci:UTI89_C1063"/>
<dbReference type="HOGENOM" id="CLU_144710_3_1_6"/>
<dbReference type="Proteomes" id="UP000001952">
    <property type="component" value="Chromosome"/>
</dbReference>
<dbReference type="FunFam" id="1.10.1660.10:FF:000006">
    <property type="entry name" value="Chaperone modulatory protein CbpM"/>
    <property type="match status" value="1"/>
</dbReference>
<dbReference type="Gene3D" id="1.10.1660.10">
    <property type="match status" value="1"/>
</dbReference>
<dbReference type="HAMAP" id="MF_01155">
    <property type="entry name" value="CbpM"/>
    <property type="match status" value="1"/>
</dbReference>
<dbReference type="InterPro" id="IPR022835">
    <property type="entry name" value="CbpM"/>
</dbReference>
<dbReference type="NCBIfam" id="NF007617">
    <property type="entry name" value="PRK10265.1"/>
    <property type="match status" value="1"/>
</dbReference>
<dbReference type="Pfam" id="PF13591">
    <property type="entry name" value="MerR_2"/>
    <property type="match status" value="1"/>
</dbReference>
<accession>Q1RDL7</accession>
<sequence>MANVTVTFTITEFCLHTGISEEELNEIVGLGVVEPSEIQETTWVFDDHAAIVVQRAVRLRHELALDWPGIAVALTLMDDIAHLKQENRLLRQRLSRFVAHP</sequence>
<evidence type="ECO:0000255" key="1">
    <source>
        <dbReference type="HAMAP-Rule" id="MF_01155"/>
    </source>
</evidence>
<comment type="function">
    <text evidence="1">Interacts with CbpA and inhibits both the DnaJ-like co-chaperone activity and the DNA binding activity of CbpA. Together with CbpA, modulates the activity of the DnaK chaperone system. Does not inhibit the co-chaperone activity of DnaJ.</text>
</comment>
<comment type="similarity">
    <text evidence="1">Belongs to the CbpM family.</text>
</comment>
<feature type="chain" id="PRO_0000286888" description="Chaperone modulatory protein CbpM">
    <location>
        <begin position="1"/>
        <end position="101"/>
    </location>
</feature>
<protein>
    <recommendedName>
        <fullName evidence="1">Chaperone modulatory protein CbpM</fullName>
    </recommendedName>
</protein>
<name>CBPM_ECOUT</name>